<organism>
    <name type="scientific">Enterobacteria phage fd</name>
    <name type="common">Bacteriophage fd</name>
    <dbReference type="NCBI Taxonomy" id="2847073"/>
    <lineage>
        <taxon>Viruses</taxon>
        <taxon>Monodnaviria</taxon>
        <taxon>Loebvirae</taxon>
        <taxon>Hofneiviricota</taxon>
        <taxon>Faserviricetes</taxon>
        <taxon>Tubulavirales</taxon>
        <taxon>Inoviridae</taxon>
        <taxon>Inovirus</taxon>
        <taxon>Enterobacteria phage M13</taxon>
    </lineage>
</organism>
<feature type="signal peptide" evidence="7">
    <location>
        <begin position="1"/>
        <end position="18"/>
    </location>
</feature>
<feature type="chain" id="PRO_0000003289" description="Attachment protein G3P">
    <location>
        <begin position="19"/>
        <end position="424"/>
    </location>
</feature>
<feature type="transmembrane region" description="Helical" evidence="2">
    <location>
        <begin position="398"/>
        <end position="418"/>
    </location>
</feature>
<feature type="region of interest" description="N1" evidence="4 5">
    <location>
        <begin position="19"/>
        <end position="85"/>
    </location>
</feature>
<feature type="region of interest" description="Disordered" evidence="3">
    <location>
        <begin position="83"/>
        <end position="147"/>
    </location>
</feature>
<feature type="region of interest" description="G1 (Gly-rich linker)">
    <location>
        <begin position="86"/>
        <end position="104"/>
    </location>
</feature>
<feature type="region of interest" description="Hinge" evidence="4">
    <location>
        <begin position="105"/>
        <end position="141"/>
    </location>
</feature>
<feature type="region of interest" description="N2" evidence="4 5">
    <location>
        <begin position="142"/>
        <end position="228"/>
    </location>
</feature>
<feature type="region of interest" description="Disordered" evidence="3">
    <location>
        <begin position="222"/>
        <end position="279"/>
    </location>
</feature>
<feature type="region of interest" description="Not essential for gene 3 function">
    <location>
        <begin position="253"/>
        <end position="262"/>
    </location>
</feature>
<feature type="region of interest" description="CT">
    <location>
        <begin position="275"/>
        <end position="424"/>
    </location>
</feature>
<feature type="compositionally biased region" description="Gly residues" evidence="3">
    <location>
        <begin position="86"/>
        <end position="105"/>
    </location>
</feature>
<feature type="compositionally biased region" description="Polar residues" evidence="3">
    <location>
        <begin position="132"/>
        <end position="147"/>
    </location>
</feature>
<feature type="compositionally biased region" description="Gly residues" evidence="3">
    <location>
        <begin position="235"/>
        <end position="273"/>
    </location>
</feature>
<feature type="disulfide bond" evidence="4 12 13">
    <location>
        <begin position="25"/>
        <end position="54"/>
    </location>
</feature>
<feature type="disulfide bond" evidence="4 12 13">
    <location>
        <begin position="64"/>
        <end position="71"/>
    </location>
</feature>
<feature type="disulfide bond" evidence="4 12 13">
    <location>
        <begin position="206"/>
        <end position="219"/>
    </location>
</feature>
<feature type="sequence conflict" description="In Ref. 2; AA sequence." evidence="11" ref="2">
    <original>C</original>
    <variation>P</variation>
    <location>
        <position position="25"/>
    </location>
</feature>
<feature type="sequence conflict" description="In Ref. 2; AA sequence." evidence="11" ref="2">
    <original>A</original>
    <variation>P</variation>
    <location>
        <position position="27"/>
    </location>
</feature>
<feature type="helix" evidence="17">
    <location>
        <begin position="22"/>
        <end position="27"/>
    </location>
</feature>
<feature type="strand" evidence="17">
    <location>
        <begin position="31"/>
        <end position="37"/>
    </location>
</feature>
<feature type="strand" evidence="16">
    <location>
        <begin position="39"/>
        <end position="41"/>
    </location>
</feature>
<feature type="turn" evidence="17">
    <location>
        <begin position="42"/>
        <end position="44"/>
    </location>
</feature>
<feature type="strand" evidence="17">
    <location>
        <begin position="47"/>
        <end position="51"/>
    </location>
</feature>
<feature type="strand" evidence="17">
    <location>
        <begin position="54"/>
        <end position="64"/>
    </location>
</feature>
<feature type="strand" evidence="17">
    <location>
        <begin position="66"/>
        <end position="69"/>
    </location>
</feature>
<feature type="strand" evidence="17">
    <location>
        <begin position="71"/>
        <end position="80"/>
    </location>
</feature>
<feature type="helix" evidence="18">
    <location>
        <begin position="83"/>
        <end position="85"/>
    </location>
</feature>
<feature type="strand" evidence="17">
    <location>
        <begin position="115"/>
        <end position="120"/>
    </location>
</feature>
<feature type="strand" evidence="17">
    <location>
        <begin position="125"/>
        <end position="128"/>
    </location>
</feature>
<feature type="strand" evidence="17">
    <location>
        <begin position="130"/>
        <end position="134"/>
    </location>
</feature>
<feature type="strand" evidence="17">
    <location>
        <begin position="142"/>
        <end position="146"/>
    </location>
</feature>
<feature type="strand" evidence="17">
    <location>
        <begin position="152"/>
        <end position="154"/>
    </location>
</feature>
<feature type="strand" evidence="17">
    <location>
        <begin position="157"/>
        <end position="162"/>
    </location>
</feature>
<feature type="strand" evidence="17">
    <location>
        <begin position="165"/>
        <end position="175"/>
    </location>
</feature>
<feature type="strand" evidence="17">
    <location>
        <begin position="177"/>
        <end position="179"/>
    </location>
</feature>
<feature type="strand" evidence="17">
    <location>
        <begin position="181"/>
        <end position="188"/>
    </location>
</feature>
<feature type="helix" evidence="17">
    <location>
        <begin position="192"/>
        <end position="199"/>
    </location>
</feature>
<feature type="turn" evidence="17">
    <location>
        <begin position="200"/>
        <end position="208"/>
    </location>
</feature>
<feature type="strand" evidence="17">
    <location>
        <begin position="225"/>
        <end position="228"/>
    </location>
</feature>
<organismHost>
    <name type="scientific">Escherichia coli</name>
    <dbReference type="NCBI Taxonomy" id="562"/>
</organismHost>
<gene>
    <name type="primary">III</name>
</gene>
<dbReference type="EMBL" id="J02451">
    <property type="protein sequence ID" value="AAA32309.1"/>
    <property type="molecule type" value="Genomic_DNA"/>
</dbReference>
<dbReference type="PIR" id="A04266">
    <property type="entry name" value="Z3BPFD"/>
</dbReference>
<dbReference type="PDB" id="1FGP">
    <property type="method" value="NMR"/>
    <property type="chains" value="A=20-85"/>
</dbReference>
<dbReference type="PDB" id="2G3P">
    <property type="method" value="X-ray"/>
    <property type="resolution" value="1.90 A"/>
    <property type="chains" value="A/B=19-235"/>
</dbReference>
<dbReference type="PDB" id="3DGS">
    <property type="method" value="X-ray"/>
    <property type="resolution" value="1.90 A"/>
    <property type="chains" value="A/B=19-235"/>
</dbReference>
<dbReference type="PDB" id="3KNQ">
    <property type="method" value="X-ray"/>
    <property type="resolution" value="2.13 A"/>
    <property type="chains" value="A/B=19-240"/>
</dbReference>
<dbReference type="PDBsum" id="1FGP"/>
<dbReference type="PDBsum" id="2G3P"/>
<dbReference type="PDBsum" id="3DGS"/>
<dbReference type="PDBsum" id="3KNQ"/>
<dbReference type="SMR" id="P03661"/>
<dbReference type="KEGG" id="vg:22475004"/>
<dbReference type="EvolutionaryTrace" id="P03661"/>
<dbReference type="Proteomes" id="UP000001836">
    <property type="component" value="Genome"/>
</dbReference>
<dbReference type="GO" id="GO:0033644">
    <property type="term" value="C:host cell membrane"/>
    <property type="evidence" value="ECO:0007669"/>
    <property type="project" value="UniProtKB-SubCell"/>
</dbReference>
<dbReference type="GO" id="GO:0016020">
    <property type="term" value="C:membrane"/>
    <property type="evidence" value="ECO:0007669"/>
    <property type="project" value="UniProtKB-KW"/>
</dbReference>
<dbReference type="GO" id="GO:0019028">
    <property type="term" value="C:viral capsid"/>
    <property type="evidence" value="ECO:0000315"/>
    <property type="project" value="CAFA"/>
</dbReference>
<dbReference type="GO" id="GO:0098671">
    <property type="term" value="P:adhesion receptor-mediated virion attachment to host cell"/>
    <property type="evidence" value="ECO:0007669"/>
    <property type="project" value="UniProtKB-KW"/>
</dbReference>
<dbReference type="GO" id="GO:0098670">
    <property type="term" value="P:entry receptor-mediated virion attachment to host cell"/>
    <property type="evidence" value="ECO:0007669"/>
    <property type="project" value="UniProtKB-KW"/>
</dbReference>
<dbReference type="GO" id="GO:0099045">
    <property type="term" value="P:viral extrusion"/>
    <property type="evidence" value="ECO:0007669"/>
    <property type="project" value="UniProtKB-KW"/>
</dbReference>
<dbReference type="GO" id="GO:0039666">
    <property type="term" value="P:virion attachment to host cell pilus"/>
    <property type="evidence" value="ECO:0000315"/>
    <property type="project" value="CAFA"/>
</dbReference>
<dbReference type="FunFam" id="3.90.450.1:FF:000001">
    <property type="entry name" value="Attachment protein G3P"/>
    <property type="match status" value="1"/>
</dbReference>
<dbReference type="Gene3D" id="3.90.450.1">
    <property type="entry name" value="Minor Coat Protein, Domain 2"/>
    <property type="match status" value="1"/>
</dbReference>
<dbReference type="Gene3D" id="2.30.27.10">
    <property type="entry name" value="Phage FD Coat Protein,Membrane penetration domain"/>
    <property type="match status" value="1"/>
</dbReference>
<dbReference type="InterPro" id="IPR008021">
    <property type="entry name" value="Attachment_G3P_N"/>
</dbReference>
<dbReference type="InterPro" id="IPR036200">
    <property type="entry name" value="Attachment_G3P_N_sf"/>
</dbReference>
<dbReference type="InterPro" id="IPR013834">
    <property type="entry name" value="Phage_G3P_N2_sf"/>
</dbReference>
<dbReference type="Pfam" id="PF05357">
    <property type="entry name" value="Phage_Coat_A"/>
    <property type="match status" value="2"/>
</dbReference>
<dbReference type="SUPFAM" id="SSF50176">
    <property type="entry name" value="N-terminal domains of the minor coat protein g3p"/>
    <property type="match status" value="2"/>
</dbReference>
<sequence length="424" mass="44638">MKKLLFAIPLVVPFYSHSAETVESCLAKPHTENSFTNVWKDDKTLDRYANYEGCLWNATGVVVCTGDETQCYGTWVPIGLAIPENEGGGSEGGGSEGGGSEGGGTKPPEYGDTPIPGYTYINPLDGTYPPGTEQNPANPNPSLEESQPLNTFMFQNNRFRNRQGALTVYTGTVTQGTDPVKTYYQYTPVSSKAMYDAYWNGKFRDCAFHSGFNEDPFVCEYQGQSSDLPQPPVNAGGGSGGGSGGGSEGGGSEGGGSEGGGSEGGGSGGGSGSGDFDYEKMANANKGAMTENADENALQSDAKGKLDSVATDYGAAIDGFIGDVSGLANGNGATGDFAGSNSQMAQVGDGDNSPLMNNFRQYLPSLPQSVECRPYVFGAGKPYEFSIDCDKINLFRGVFAFLLYVATFMYVFSTFANILRNKES</sequence>
<name>G3P_BPFD</name>
<evidence type="ECO:0000250" key="1">
    <source>
        <dbReference type="UniProtKB" id="P69168"/>
    </source>
</evidence>
<evidence type="ECO:0000255" key="2"/>
<evidence type="ECO:0000256" key="3">
    <source>
        <dbReference type="SAM" id="MobiDB-lite"/>
    </source>
</evidence>
<evidence type="ECO:0000269" key="4">
    <source>
    </source>
</evidence>
<evidence type="ECO:0000269" key="5">
    <source>
    </source>
</evidence>
<evidence type="ECO:0000269" key="6">
    <source>
    </source>
</evidence>
<evidence type="ECO:0000269" key="7">
    <source>
    </source>
</evidence>
<evidence type="ECO:0000269" key="8">
    <source>
    </source>
</evidence>
<evidence type="ECO:0000269" key="9">
    <source>
    </source>
</evidence>
<evidence type="ECO:0000303" key="10">
    <source>
    </source>
</evidence>
<evidence type="ECO:0000305" key="11"/>
<evidence type="ECO:0007744" key="12">
    <source>
        <dbReference type="PDB" id="1FGP"/>
    </source>
</evidence>
<evidence type="ECO:0007744" key="13">
    <source>
        <dbReference type="PDB" id="2G3P"/>
    </source>
</evidence>
<evidence type="ECO:0007744" key="14">
    <source>
        <dbReference type="PDB" id="3DGS"/>
    </source>
</evidence>
<evidence type="ECO:0007744" key="15">
    <source>
        <dbReference type="PDB" id="3KNQ"/>
    </source>
</evidence>
<evidence type="ECO:0007829" key="16">
    <source>
        <dbReference type="PDB" id="1FGP"/>
    </source>
</evidence>
<evidence type="ECO:0007829" key="17">
    <source>
        <dbReference type="PDB" id="2G3P"/>
    </source>
</evidence>
<evidence type="ECO:0007829" key="18">
    <source>
        <dbReference type="PDB" id="3DGS"/>
    </source>
</evidence>
<reference key="1">
    <citation type="journal article" date="1978" name="Nucleic Acids Res.">
        <title>Nucleotide sequence of bacteriophage fd DNA.</title>
        <authorList>
            <person name="Beck E."/>
            <person name="Sommer R."/>
            <person name="Auerswald E.A."/>
            <person name="Kurz C."/>
            <person name="Zink B."/>
            <person name="Osterburg G."/>
            <person name="Schaller H."/>
            <person name="Sugimoto K."/>
            <person name="Sugisaki H."/>
            <person name="Okamoto T."/>
            <person name="Takanami M."/>
        </authorList>
    </citation>
    <scope>NUCLEOTIDE SEQUENCE [GENOMIC DNA]</scope>
    <source>
        <strain>478 / Heidelberg</strain>
    </source>
</reference>
<reference key="2">
    <citation type="journal article" date="1977" name="Biochemistry">
        <title>Adsorption protein of the bacteriophage fd: isolation, molecular properties, and location in the virus.</title>
        <authorList>
            <person name="Goldsmith M.E."/>
            <person name="Konigsberg W.H."/>
        </authorList>
    </citation>
    <scope>PROTEIN SEQUENCE OF 19-27</scope>
</reference>
<reference key="3">
    <citation type="journal article" date="1997" name="Cell">
        <title>The C-terminal domain of TolA is the coreceptor for filamentous phage infection of E. coli.</title>
        <authorList>
            <person name="Riechmann L."/>
            <person name="Holliger P."/>
        </authorList>
    </citation>
    <scope>INTERACTION WITH HOST TOLA</scope>
    <scope>FUNCTION</scope>
</reference>
<reference key="4">
    <citation type="journal article" date="2002" name="J. Mol. Biol.">
        <title>Delineating the site of interaction on the pIII protein of filamentous bacteriophage fd with the F-pilus of Escherichia coli.</title>
        <authorList>
            <person name="Deng L.W."/>
            <person name="Perham R.N."/>
        </authorList>
    </citation>
    <scope>FUNCTION</scope>
    <scope>INTERACTION WITH HOST PILUS</scope>
    <scope>DOMAIN</scope>
</reference>
<reference key="5">
    <citation type="journal article" date="2011" name="J. Mol. Biol.">
        <title>The filamentous phages fd and IF1 use different mechanisms to infect Escherichia coli.</title>
        <authorList>
            <person name="Lorenz S.H."/>
            <person name="Jakob R.P."/>
            <person name="Weininger U."/>
            <person name="Balbach J."/>
            <person name="Dobbek H."/>
            <person name="Schmid F.X."/>
        </authorList>
    </citation>
    <scope>FUNCTION</scope>
</reference>
<reference key="6">
    <citation type="journal article" date="2023" name="J. Biol. Chem.">
        <title>Direct interaction between fd phage pilot protein pIII and the TolQ-TolR proton-dependent motor provides new insights into the import of filamentous phages.</title>
        <authorList>
            <person name="Pellegri C."/>
            <person name="Moreau A."/>
            <person name="Duche D."/>
            <person name="Houot L."/>
        </authorList>
    </citation>
    <scope>INTERACTION WITH HOST TOLQ</scope>
    <scope>INTERACTION WITH HOST TOLR</scope>
    <scope>FUNCTION</scope>
</reference>
<reference evidence="12" key="7">
    <citation type="journal article" date="1997" name="Structure">
        <title>A conserved infection pathway for filamentous bacteriophages is suggested by the structure of the membrane penetration domain of the minor coat protein g3p from phage fd.</title>
        <authorList>
            <person name="Holliger P."/>
            <person name="Riechmann L."/>
        </authorList>
    </citation>
    <scope>STRUCTURE BY NMR OF 20-85</scope>
    <scope>DISULFIDE BONDS</scope>
</reference>
<reference evidence="13" key="8">
    <citation type="journal article" date="1999" name="J. Mol. Biol.">
        <title>Crystal structure of the two N-terminal domains of g3p from filamentous phage fd at 1.9 A: evidence for conformational lability.</title>
        <authorList>
            <person name="Holliger P."/>
            <person name="Riechmann L."/>
            <person name="Williams R.L."/>
        </authorList>
    </citation>
    <scope>X-RAY CRYSTALLOGRAPHY (1.90 ANGSTROMS) OF 19-235</scope>
    <scope>DISULFIDE BONDS</scope>
    <scope>FUNCTION</scope>
    <scope>DOMAIN</scope>
</reference>
<reference evidence="14" key="9">
    <citation type="journal article" date="2008" name="J. Mol. Biol.">
        <title>Changing the determinants of protein stability from covalent to non-covalent interactions by in vitro evolution: a structural and energetic analysis.</title>
        <authorList>
            <person name="Kather I."/>
            <person name="Jakob R."/>
            <person name="Dobbek H."/>
            <person name="Schmid F.X."/>
        </authorList>
    </citation>
    <scope>X-RAY CRYSTALLOGRAPHY (1.90 ANGSTROMS) OF 19-235</scope>
</reference>
<reference evidence="15" key="10">
    <citation type="journal article" date="2010" name="J. Mol. Biol.">
        <title>Elimination of a cis-proline-containing loop and turn optimization stabilizes a protein and accelerates its folding.</title>
        <authorList>
            <person name="Jakob R.P."/>
            <person name="Zierer B.K."/>
            <person name="Weininger U."/>
            <person name="Hofmann S.D."/>
            <person name="Lorenz S.H."/>
            <person name="Balbach J."/>
            <person name="Dobbek H."/>
            <person name="Schmid F.X."/>
        </authorList>
    </citation>
    <scope>X-RAY CRYSTALLOGRAPHY (2.13 ANGSTROMS) OF 19-174 AND 181-238</scope>
</reference>
<protein>
    <recommendedName>
        <fullName>Attachment protein G3P</fullName>
    </recommendedName>
    <alternativeName>
        <fullName>Gene 3 protein</fullName>
        <shortName>G3P</shortName>
    </alternativeName>
    <alternativeName>
        <fullName>Minor coat protein</fullName>
    </alternativeName>
</protein>
<proteinExistence type="evidence at protein level"/>
<keyword id="KW-0002">3D-structure</keyword>
<keyword id="KW-0167">Capsid protein</keyword>
<keyword id="KW-0903">Direct protein sequencing</keyword>
<keyword id="KW-1015">Disulfide bond</keyword>
<keyword id="KW-1043">Host membrane</keyword>
<keyword id="KW-0945">Host-virus interaction</keyword>
<keyword id="KW-0472">Membrane</keyword>
<keyword id="KW-0732">Signal</keyword>
<keyword id="KW-0812">Transmembrane</keyword>
<keyword id="KW-1133">Transmembrane helix</keyword>
<keyword id="KW-1233">Viral attachment to host adhesion receptor</keyword>
<keyword id="KW-1161">Viral attachment to host cell</keyword>
<keyword id="KW-1175">Viral attachment to host cell pilus</keyword>
<keyword id="KW-1234">Viral attachment to host entry receptor</keyword>
<keyword id="KW-1249">Viral extrusion</keyword>
<keyword id="KW-1162">Viral penetration into host cytoplasm</keyword>
<keyword id="KW-1241">Viral penetration into host cytoplasm via pilus retraction</keyword>
<keyword id="KW-1188">Viral release from host cell</keyword>
<keyword id="KW-0946">Virion</keyword>
<keyword id="KW-1160">Virus entry into host cell</keyword>
<accession>P03661</accession>
<comment type="function">
    <text evidence="5 6 8 9">Plays essential roles both in the penetration of the viral genome into the bacterial host via pilus retraction and in the extrusion process (PubMed:12054858, PubMed:37451481, PubMed:9244308). During the initial step of infection, G3P mediates adsorption of the phage to its primary receptor, the tip of host F-pilus (PubMed:12054858). Attachment of the phage causes pilus retraction bringing the viral particle into close proximity of the host cell inner membrane (PubMed:12054858). Binding to the host pilus initiates a change in the G3P conformation, allowing subsequent interaction with the host entry receptors TolA, TolQ and TolR and penetration of the viral DNA into the host cytoplasm (PubMed:21110981, PubMed:37451481, PubMed:9244308). In the extrusion process, G3P mediates the release of the membrane-anchored virion from the cell via its C-terminal domain.</text>
</comment>
<comment type="subunit">
    <text evidence="1 5 8 9">Interacts with G6P; this interaction is required for proper integration of G3P and G6P into the virion (By similarity). Interacts with G8P. Interacts with the tip of the host pilus (PubMed:12054858). Interacts (via N-terminus) with host TolA (PubMed:9244308). Interacts (via transmembrane domain) with host TolQ (via 2nd and 3rd transmembrane domains); this interaction allows the phage translocation across the host inner membrane (PubMed:37451481). Interacts (via transmembrane domain) with host TolR (via transmembrane domain); this interaction allows the phage translocation across the host inner membrane (PubMed:37451481).</text>
</comment>
<comment type="subcellular location">
    <subcellularLocation>
        <location evidence="11">Virion</location>
    </subcellularLocation>
    <subcellularLocation>
        <location evidence="11">Host membrane</location>
        <topology evidence="11">Single-pass type I membrane protein</topology>
    </subcellularLocation>
    <text evidence="10">Prior to assembly, G3P is found associated with the bacterial host inner membrane. There are about 5 copies of this protein per mature phage that are located on the head side of the filamentous virion.</text>
</comment>
<comment type="domain">
    <text evidence="4 5">Consists of 3 domains (N1/D1, N2/D2, and CT) separated by glycine-rich repeats and a C-terminal transmembrane segment (PubMed:10329170, PubMed:12054858). The N2 domain interacts with the F pilus, whereas the N1 domain forms a complex with the C-terminal domain of TolA at later stages of the infection process (PubMed:10329170, PubMed:12054858). The C-terminal domain is required for release of viral particles from the host bacterial membrane and proper integration of G3P and G6P proteins in the virion.</text>
</comment>
<comment type="similarity">
    <text evidence="11">Belongs to the inovirus G3P protein family.</text>
</comment>